<proteinExistence type="inferred from homology"/>
<comment type="function">
    <text evidence="1">Catalyzes the N-acylation of UDP-3-O-acylglucosamine using 3-hydroxyacyl-ACP as the acyl donor. Is involved in the biosynthesis of lipid A, a phosphorylated glycolipid that anchors the lipopolysaccharide to the outer membrane of the cell.</text>
</comment>
<comment type="catalytic activity">
    <reaction evidence="1">
        <text>a UDP-3-O-[(3R)-3-hydroxyacyl]-alpha-D-glucosamine + a (3R)-hydroxyacyl-[ACP] = a UDP-2-N,3-O-bis[(3R)-3-hydroxyacyl]-alpha-D-glucosamine + holo-[ACP] + H(+)</text>
        <dbReference type="Rhea" id="RHEA:53836"/>
        <dbReference type="Rhea" id="RHEA-COMP:9685"/>
        <dbReference type="Rhea" id="RHEA-COMP:9945"/>
        <dbReference type="ChEBI" id="CHEBI:15378"/>
        <dbReference type="ChEBI" id="CHEBI:64479"/>
        <dbReference type="ChEBI" id="CHEBI:78827"/>
        <dbReference type="ChEBI" id="CHEBI:137740"/>
        <dbReference type="ChEBI" id="CHEBI:137748"/>
        <dbReference type="EC" id="2.3.1.191"/>
    </reaction>
</comment>
<comment type="pathway">
    <text evidence="1">Bacterial outer membrane biogenesis; LPS lipid A biosynthesis.</text>
</comment>
<comment type="subunit">
    <text evidence="1">Homotrimer.</text>
</comment>
<comment type="similarity">
    <text evidence="1">Belongs to the transferase hexapeptide repeat family. LpxD subfamily.</text>
</comment>
<protein>
    <recommendedName>
        <fullName evidence="1">UDP-3-O-acylglucosamine N-acyltransferase 1</fullName>
        <ecNumber evidence="1">2.3.1.191</ecNumber>
    </recommendedName>
</protein>
<organism>
    <name type="scientific">Francisella tularensis subsp. holarctica (strain OSU18)</name>
    <dbReference type="NCBI Taxonomy" id="393011"/>
    <lineage>
        <taxon>Bacteria</taxon>
        <taxon>Pseudomonadati</taxon>
        <taxon>Pseudomonadota</taxon>
        <taxon>Gammaproteobacteria</taxon>
        <taxon>Thiotrichales</taxon>
        <taxon>Francisellaceae</taxon>
        <taxon>Francisella</taxon>
    </lineage>
</organism>
<reference key="1">
    <citation type="journal article" date="2006" name="J. Bacteriol.">
        <title>Chromosome rearrangement and diversification of Francisella tularensis revealed by the type B (OSU18) genome sequence.</title>
        <authorList>
            <person name="Petrosino J.F."/>
            <person name="Xiang Q."/>
            <person name="Karpathy S.E."/>
            <person name="Jiang H."/>
            <person name="Yerrapragada S."/>
            <person name="Liu Y."/>
            <person name="Gioia J."/>
            <person name="Hemphill L."/>
            <person name="Gonzalez A."/>
            <person name="Raghavan T.M."/>
            <person name="Uzman A."/>
            <person name="Fox G.E."/>
            <person name="Highlander S."/>
            <person name="Reichard M."/>
            <person name="Morton R.J."/>
            <person name="Clinkenbeard K.D."/>
            <person name="Weinstock G.M."/>
        </authorList>
    </citation>
    <scope>NUCLEOTIDE SEQUENCE [LARGE SCALE GENOMIC DNA]</scope>
    <source>
        <strain>OSU18</strain>
    </source>
</reference>
<accession>Q0BNW4</accession>
<dbReference type="EC" id="2.3.1.191" evidence="1"/>
<dbReference type="EMBL" id="CP000437">
    <property type="protein sequence ID" value="ABI82220.1"/>
    <property type="molecule type" value="Genomic_DNA"/>
</dbReference>
<dbReference type="SMR" id="Q0BNW4"/>
<dbReference type="KEGG" id="fth:FTH_0191"/>
<dbReference type="UniPathway" id="UPA00973"/>
<dbReference type="GO" id="GO:0016020">
    <property type="term" value="C:membrane"/>
    <property type="evidence" value="ECO:0007669"/>
    <property type="project" value="GOC"/>
</dbReference>
<dbReference type="GO" id="GO:0016410">
    <property type="term" value="F:N-acyltransferase activity"/>
    <property type="evidence" value="ECO:0007669"/>
    <property type="project" value="InterPro"/>
</dbReference>
<dbReference type="GO" id="GO:0009245">
    <property type="term" value="P:lipid A biosynthetic process"/>
    <property type="evidence" value="ECO:0007669"/>
    <property type="project" value="UniProtKB-UniRule"/>
</dbReference>
<dbReference type="CDD" id="cd03352">
    <property type="entry name" value="LbH_LpxD"/>
    <property type="match status" value="1"/>
</dbReference>
<dbReference type="Gene3D" id="2.160.10.10">
    <property type="entry name" value="Hexapeptide repeat proteins"/>
    <property type="match status" value="1"/>
</dbReference>
<dbReference type="Gene3D" id="3.40.1390.10">
    <property type="entry name" value="MurE/MurF, N-terminal domain"/>
    <property type="match status" value="1"/>
</dbReference>
<dbReference type="HAMAP" id="MF_00523">
    <property type="entry name" value="LpxD"/>
    <property type="match status" value="1"/>
</dbReference>
<dbReference type="InterPro" id="IPR001451">
    <property type="entry name" value="Hexapep"/>
</dbReference>
<dbReference type="InterPro" id="IPR018357">
    <property type="entry name" value="Hexapep_transf_CS"/>
</dbReference>
<dbReference type="InterPro" id="IPR007691">
    <property type="entry name" value="LpxD"/>
</dbReference>
<dbReference type="InterPro" id="IPR011004">
    <property type="entry name" value="Trimer_LpxA-like_sf"/>
</dbReference>
<dbReference type="InterPro" id="IPR020573">
    <property type="entry name" value="UDP_GlcNAc_AcTrfase_non-rep"/>
</dbReference>
<dbReference type="NCBIfam" id="TIGR01853">
    <property type="entry name" value="lipid_A_lpxD"/>
    <property type="match status" value="1"/>
</dbReference>
<dbReference type="NCBIfam" id="NF002060">
    <property type="entry name" value="PRK00892.1"/>
    <property type="match status" value="1"/>
</dbReference>
<dbReference type="PANTHER" id="PTHR43378">
    <property type="entry name" value="UDP-3-O-ACYLGLUCOSAMINE N-ACYLTRANSFERASE"/>
    <property type="match status" value="1"/>
</dbReference>
<dbReference type="PANTHER" id="PTHR43378:SF2">
    <property type="entry name" value="UDP-3-O-ACYLGLUCOSAMINE N-ACYLTRANSFERASE 1, MITOCHONDRIAL-RELATED"/>
    <property type="match status" value="1"/>
</dbReference>
<dbReference type="Pfam" id="PF00132">
    <property type="entry name" value="Hexapep"/>
    <property type="match status" value="2"/>
</dbReference>
<dbReference type="Pfam" id="PF04613">
    <property type="entry name" value="LpxD"/>
    <property type="match status" value="1"/>
</dbReference>
<dbReference type="SUPFAM" id="SSF51161">
    <property type="entry name" value="Trimeric LpxA-like enzymes"/>
    <property type="match status" value="1"/>
</dbReference>
<dbReference type="PROSITE" id="PS00101">
    <property type="entry name" value="HEXAPEP_TRANSFERASES"/>
    <property type="match status" value="1"/>
</dbReference>
<feature type="chain" id="PRO_0000264370" description="UDP-3-O-acylglucosamine N-acyltransferase 1">
    <location>
        <begin position="1"/>
        <end position="347"/>
    </location>
</feature>
<feature type="active site" description="Proton acceptor" evidence="1">
    <location>
        <position position="246"/>
    </location>
</feature>
<gene>
    <name evidence="1" type="primary">lpxD1</name>
    <name type="ordered locus">FTH_0191</name>
</gene>
<sequence>MQYTLKQISEHLNAKVINEPSGEVIITGLNYAEQAKENDLTLIDKQEHIKLWQNSKAAAAIVSKKISKELAQVNDKPLIVVNNADLAMAKILELFSVPYPEQNGIHEKAVIDPTAKIGKNVSIGPGAYIGKNVEIGDNTIIYANVCIYNDAKVGTNCIIWPSVTIRDRTIIDHFCRLYSNCSIGSDGFGYRPSEDGRTIVRIPHIGNVVIGSFVDIGSNTCINNAKYGSTIIGDYTKIDNLVQIGHNVIIGKGCMICGQAGISGSVTIGDGVIIAGNAGIKDHTNIGSDARIGGKAGVMWDVPAGESHMGYPAYKDSELAKQWIAIRKLPETMKKLKAIAKSLNIDL</sequence>
<keyword id="KW-0012">Acyltransferase</keyword>
<keyword id="KW-0441">Lipid A biosynthesis</keyword>
<keyword id="KW-0444">Lipid biosynthesis</keyword>
<keyword id="KW-0443">Lipid metabolism</keyword>
<keyword id="KW-0677">Repeat</keyword>
<keyword id="KW-0808">Transferase</keyword>
<name>LPXD1_FRATO</name>
<evidence type="ECO:0000255" key="1">
    <source>
        <dbReference type="HAMAP-Rule" id="MF_00523"/>
    </source>
</evidence>